<keyword id="KW-1035">Host cytoplasm</keyword>
<keyword id="KW-0694">RNA-binding</keyword>
<evidence type="ECO:0000250" key="1">
    <source>
        <dbReference type="UniProtKB" id="P03526"/>
    </source>
</evidence>
<evidence type="ECO:0000250" key="2">
    <source>
        <dbReference type="UniProtKB" id="P07940"/>
    </source>
</evidence>
<evidence type="ECO:0000269" key="3">
    <source>
    </source>
</evidence>
<evidence type="ECO:0000305" key="4"/>
<sequence length="366" mass="41334">MASSLRAAISKIKRDDVGQQVCPNYVMLRSSVNTKVVRNVVDYQIKTGGFFSCIAMLRPLQYAKRERLLGQRNLERIAARDVLQTRDLHSLCMPTPDAPMTNYQASTMRELVCDHFKVDHVDGLRYVPMDDRYSPSSLARLFTMGMAGLHITTEPAYKRVPIMHLAADLDCMTFALPYMITVDGDTVVPVAPTLPAERLLDDGFKGYGCLDISYGCEVDANNRSAGDQSMDSSRCINELYTAETAEAICILKTCLILNCMQFKLEMDDLAHNGFELDKVQMMIPFSERVFRMASAFATIDVQCFRFCLLMKDKNLKIDMRETMRLWTRAGSDDAISTSSLTISLDRGRWVAMDMNEVRLLVFPARV</sequence>
<proteinExistence type="evidence at protein level"/>
<gene>
    <name type="primary">S3</name>
</gene>
<feature type="chain" id="PRO_0000222760" description="Protein sigma-NS">
    <location>
        <begin position="1"/>
        <end position="366"/>
    </location>
</feature>
<feature type="region of interest" description="Important for ssRNA-binding and formation of complexes" evidence="2">
    <location>
        <begin position="1"/>
        <end position="11"/>
    </location>
</feature>
<reference key="1">
    <citation type="journal article" date="1987" name="Virology">
        <title>Comparison of the reovirus serotype 1, 2, and 3 S3 genome segments encoding the nonstructural protein sigma NS.</title>
        <authorList>
            <person name="Wiener J.R."/>
            <person name="Joklik W.K."/>
        </authorList>
    </citation>
    <scope>NUCLEOTIDE SEQUENCE [GENOMIC RNA]</scope>
</reference>
<reference key="2">
    <citation type="journal article" date="2017" name="J. Virol.">
        <title>Mammalian Orthoreovirus Factories Modulate Stress Granule Protein Localization by Interaction with G3BP1.</title>
        <authorList>
            <person name="Choudhury P."/>
            <person name="Bussiere L.D."/>
            <person name="Miller C.L."/>
        </authorList>
    </citation>
    <scope>FUNCTION</scope>
    <scope>INTERACTION WITH HOST G3BP1</scope>
    <scope>INTERACTION WITH PROTEIN MU-NS</scope>
    <scope>SUBCELLULAR LOCATION</scope>
</reference>
<organismHost>
    <name type="scientific">Mammalia</name>
    <dbReference type="NCBI Taxonomy" id="40674"/>
</organismHost>
<protein>
    <recommendedName>
        <fullName>Protein sigma-NS</fullName>
        <shortName>SigmaNS</shortName>
    </recommendedName>
</protein>
<accession>P12002</accession>
<organism>
    <name type="scientific">Reovirus type 2 (strain D5/Jones)</name>
    <name type="common">T2J</name>
    <name type="synonym">Mammalian orthoreovirus 2</name>
    <dbReference type="NCBI Taxonomy" id="10885"/>
    <lineage>
        <taxon>Viruses</taxon>
        <taxon>Riboviria</taxon>
        <taxon>Orthornavirae</taxon>
        <taxon>Duplornaviricota</taxon>
        <taxon>Resentoviricetes</taxon>
        <taxon>Reovirales</taxon>
        <taxon>Spinareoviridae</taxon>
        <taxon>Orthoreovirus</taxon>
        <taxon>Mammalian orthoreovirus</taxon>
    </lineage>
</organism>
<comment type="function">
    <text evidence="2 3">Protein that binds to ssRNA and participates with protein mu-NS in forming the matrix of viral factories, which are large inclusions in the host cytoplasm where replication intermediates are assembled and viral RNA replication takes place (By similarity). Plays a role in the inhibition of the integrated stress response (ISR) to escape from host cell translational shutoff (PubMed:28794026). Participates in the disruption of stress granules (SG) through its association with host G3BP1 and mu-NS (PubMed:28794026).</text>
</comment>
<comment type="subunit">
    <text evidence="1 3">Homooligomer; in presence of RNA (By similarity). Interacts with protein mu-NS; this interaction allows the localization of sigma-NS to the viral factories (PubMed:28794026). Interacts with host G3BP1 (via C-terminus); this interaction induces the relocalization of G3BP1 and other SG proteins to the viral factories periphery (PubMed:28794026).</text>
</comment>
<comment type="subcellular location">
    <subcellularLocation>
        <location>Host cytoplasm</location>
    </subcellularLocation>
    <text evidence="3">Localizes to the viral factories formed by mu-NS.</text>
</comment>
<comment type="miscellaneous">
    <text evidence="3">There is a strain variablity in the inhibition of the host integrated stress response (ISR). There is a correlation with the abilities of the strains to prevent upstream PKR activation and c phosphorylation.</text>
</comment>
<comment type="similarity">
    <text evidence="4">Belongs to the orthoreovirus sigma-NS protein family.</text>
</comment>
<dbReference type="EMBL" id="M18390">
    <property type="protein sequence ID" value="AAA47282.1"/>
    <property type="molecule type" value="Genomic_RNA"/>
</dbReference>
<dbReference type="PIR" id="B27401">
    <property type="entry name" value="MNXRT2"/>
</dbReference>
<dbReference type="SMR" id="P12002"/>
<dbReference type="Proteomes" id="UP000006370">
    <property type="component" value="Genome"/>
</dbReference>
<dbReference type="GO" id="GO:0030430">
    <property type="term" value="C:host cell cytoplasm"/>
    <property type="evidence" value="ECO:0007669"/>
    <property type="project" value="UniProtKB-SubCell"/>
</dbReference>
<dbReference type="GO" id="GO:0003968">
    <property type="term" value="F:RNA-directed RNA polymerase activity"/>
    <property type="evidence" value="ECO:0007669"/>
    <property type="project" value="InterPro"/>
</dbReference>
<dbReference type="GO" id="GO:0003727">
    <property type="term" value="F:single-stranded RNA binding"/>
    <property type="evidence" value="ECO:0007669"/>
    <property type="project" value="InterPro"/>
</dbReference>
<dbReference type="InterPro" id="IPR002507">
    <property type="entry name" value="Reovirus_polyG_pol"/>
</dbReference>
<dbReference type="Pfam" id="PF01518">
    <property type="entry name" value="PolyG_pol"/>
    <property type="match status" value="1"/>
</dbReference>
<name>SIGNS_REOVJ</name>